<organism>
    <name type="scientific">Staphylococcus aureus (strain Mu50 / ATCC 700699)</name>
    <dbReference type="NCBI Taxonomy" id="158878"/>
    <lineage>
        <taxon>Bacteria</taxon>
        <taxon>Bacillati</taxon>
        <taxon>Bacillota</taxon>
        <taxon>Bacilli</taxon>
        <taxon>Bacillales</taxon>
        <taxon>Staphylococcaceae</taxon>
        <taxon>Staphylococcus</taxon>
    </lineage>
</organism>
<accession>Q932M0</accession>
<feature type="chain" id="PRO_0000145252" description="DNA gyrase subunit A">
    <location>
        <begin position="1"/>
        <end position="889"/>
    </location>
</feature>
<feature type="domain" description="Topo IIA-type catalytic" evidence="2">
    <location>
        <begin position="35"/>
        <end position="501"/>
    </location>
</feature>
<feature type="region of interest" description="Disordered" evidence="3">
    <location>
        <begin position="811"/>
        <end position="889"/>
    </location>
</feature>
<feature type="short sequence motif" description="GyrA-box" evidence="1">
    <location>
        <begin position="528"/>
        <end position="534"/>
    </location>
</feature>
<feature type="compositionally biased region" description="Acidic residues" evidence="3">
    <location>
        <begin position="813"/>
        <end position="823"/>
    </location>
</feature>
<feature type="compositionally biased region" description="Basic and acidic residues" evidence="3">
    <location>
        <begin position="863"/>
        <end position="875"/>
    </location>
</feature>
<feature type="compositionally biased region" description="Acidic residues" evidence="3">
    <location>
        <begin position="876"/>
        <end position="889"/>
    </location>
</feature>
<feature type="active site" description="O-(5'-phospho-DNA)-tyrosine intermediate" evidence="1">
    <location>
        <position position="123"/>
    </location>
</feature>
<name>GYRA_STAAM</name>
<sequence>MAELPQSRINERNITSEMRESFLDYAMSVIVARALPDVRDGLKPVHRRILYGLNEQGMTPDKSYKKSARIVGDVMGKYHPHGDLSIYEAMVRMAQDFSYRYPLVDGQGNFGSMDGDGAAAMRYTEARMTKITLELLRDINKDTIDFIDNYDGNEREPSVLPARFPNLLANGASGIAVGMATNIPPHNLTELINGVLSLSKNPDISIAELMEDIEGPDFPTAGLILGKSGIRRAYETGRGSIQMRSRAVIEERGGGRQRIVVTEIPFQVNKARMIEKIAELVRDKKIDGITDLRDETSLRTGVRVVIDVRKDANASVILNNLYKQTPLQTSFGVNMIALVNGRPKLINLKEALVHYLEHQKTVVRRRTQYNLRKAKDRAHILEGLRIALDHIDEIISTIRESDTDKVAMKSLQQRFKLSEKQAQAILDMRLRRLTGLERDKIEAEYNELLNYISELETILADEEVLLQLVRDELTEIRDRFGDDRRTEIQLGGFEDLEDEDLIPEEQIVITLSHNNYIKRLPVSTYRAQNRGGRGVQGMNTLEEDFVSQLVTLSTHDHVLFFTNKGRVYKLKGYEVPELSRQSKGIPVVNAIELENDEVISTMIAVKDLESEDNFLVFATKRGVVKRSALSNFSRINRNGKIAISFREDDELIAVRLTSGQEDILIGTSHASLIRFPESTLRPLGRTATGVKGITLREGDEVVGLDVAHANSVDEVLVVTENGYGKRTPVNDYRLSNRGGKGIKTATITERNGNVVCITTVTGEEDLMIVTNAGVIIRLDVADISQNGRAAQGVRLIRLGDDQFVSTVAKVKEDAEDETNEDEQSTSTVSEDGTEQQREAVVNDETPGNAIHTEVIDSEENDEDGRIEVRQDFMDRVEEDIQQSSDEDEE</sequence>
<protein>
    <recommendedName>
        <fullName evidence="1">DNA gyrase subunit A</fullName>
        <ecNumber evidence="1">5.6.2.2</ecNumber>
    </recommendedName>
</protein>
<dbReference type="EC" id="5.6.2.2" evidence="1"/>
<dbReference type="EMBL" id="BA000017">
    <property type="protein sequence ID" value="BAB56168.1"/>
    <property type="molecule type" value="Genomic_DNA"/>
</dbReference>
<dbReference type="RefSeq" id="WP_000819068.1">
    <property type="nucleotide sequence ID" value="NC_002758.2"/>
</dbReference>
<dbReference type="SMR" id="Q932M0"/>
<dbReference type="BindingDB" id="Q932M0"/>
<dbReference type="KEGG" id="sav:SAV0006"/>
<dbReference type="HOGENOM" id="CLU_002977_6_1_9"/>
<dbReference type="PhylomeDB" id="Q932M0"/>
<dbReference type="Proteomes" id="UP000002481">
    <property type="component" value="Chromosome"/>
</dbReference>
<dbReference type="GO" id="GO:0005694">
    <property type="term" value="C:chromosome"/>
    <property type="evidence" value="ECO:0007669"/>
    <property type="project" value="InterPro"/>
</dbReference>
<dbReference type="GO" id="GO:0005737">
    <property type="term" value="C:cytoplasm"/>
    <property type="evidence" value="ECO:0007669"/>
    <property type="project" value="UniProtKB-SubCell"/>
</dbReference>
<dbReference type="GO" id="GO:0009330">
    <property type="term" value="C:DNA topoisomerase type II (double strand cut, ATP-hydrolyzing) complex"/>
    <property type="evidence" value="ECO:0007669"/>
    <property type="project" value="TreeGrafter"/>
</dbReference>
<dbReference type="GO" id="GO:0005524">
    <property type="term" value="F:ATP binding"/>
    <property type="evidence" value="ECO:0007669"/>
    <property type="project" value="UniProtKB-UniRule"/>
</dbReference>
<dbReference type="GO" id="GO:0003677">
    <property type="term" value="F:DNA binding"/>
    <property type="evidence" value="ECO:0007669"/>
    <property type="project" value="UniProtKB-UniRule"/>
</dbReference>
<dbReference type="GO" id="GO:0034335">
    <property type="term" value="F:DNA negative supercoiling activity"/>
    <property type="evidence" value="ECO:0007669"/>
    <property type="project" value="UniProtKB-ARBA"/>
</dbReference>
<dbReference type="GO" id="GO:0006265">
    <property type="term" value="P:DNA topological change"/>
    <property type="evidence" value="ECO:0007669"/>
    <property type="project" value="UniProtKB-UniRule"/>
</dbReference>
<dbReference type="GO" id="GO:0006261">
    <property type="term" value="P:DNA-templated DNA replication"/>
    <property type="evidence" value="ECO:0007669"/>
    <property type="project" value="UniProtKB-UniRule"/>
</dbReference>
<dbReference type="GO" id="GO:0046677">
    <property type="term" value="P:response to antibiotic"/>
    <property type="evidence" value="ECO:0007669"/>
    <property type="project" value="UniProtKB-KW"/>
</dbReference>
<dbReference type="CDD" id="cd00187">
    <property type="entry name" value="TOP4c"/>
    <property type="match status" value="1"/>
</dbReference>
<dbReference type="FunFam" id="1.10.268.10:FF:000001">
    <property type="entry name" value="DNA gyrase subunit A"/>
    <property type="match status" value="1"/>
</dbReference>
<dbReference type="FunFam" id="2.120.10.90:FF:000004">
    <property type="entry name" value="DNA gyrase subunit A"/>
    <property type="match status" value="1"/>
</dbReference>
<dbReference type="FunFam" id="3.30.1360.40:FF:000002">
    <property type="entry name" value="DNA gyrase subunit A"/>
    <property type="match status" value="1"/>
</dbReference>
<dbReference type="FunFam" id="3.90.199.10:FF:000001">
    <property type="entry name" value="DNA gyrase subunit A"/>
    <property type="match status" value="1"/>
</dbReference>
<dbReference type="Gene3D" id="3.30.1360.40">
    <property type="match status" value="1"/>
</dbReference>
<dbReference type="Gene3D" id="2.120.10.90">
    <property type="entry name" value="DNA gyrase/topoisomerase IV, subunit A, C-terminal"/>
    <property type="match status" value="1"/>
</dbReference>
<dbReference type="Gene3D" id="3.90.199.10">
    <property type="entry name" value="Topoisomerase II, domain 5"/>
    <property type="match status" value="1"/>
</dbReference>
<dbReference type="Gene3D" id="1.10.268.10">
    <property type="entry name" value="Topoisomerase, domain 3"/>
    <property type="match status" value="1"/>
</dbReference>
<dbReference type="HAMAP" id="MF_01897">
    <property type="entry name" value="GyrA"/>
    <property type="match status" value="1"/>
</dbReference>
<dbReference type="InterPro" id="IPR005743">
    <property type="entry name" value="GyrA"/>
</dbReference>
<dbReference type="InterPro" id="IPR006691">
    <property type="entry name" value="GyrA/parC_rep"/>
</dbReference>
<dbReference type="InterPro" id="IPR035516">
    <property type="entry name" value="Gyrase/topoIV_suA_C"/>
</dbReference>
<dbReference type="InterPro" id="IPR013760">
    <property type="entry name" value="Topo_IIA-like_dom_sf"/>
</dbReference>
<dbReference type="InterPro" id="IPR013758">
    <property type="entry name" value="Topo_IIA_A/C_ab"/>
</dbReference>
<dbReference type="InterPro" id="IPR013757">
    <property type="entry name" value="Topo_IIA_A_a_sf"/>
</dbReference>
<dbReference type="InterPro" id="IPR002205">
    <property type="entry name" value="Topo_IIA_dom_A"/>
</dbReference>
<dbReference type="InterPro" id="IPR050220">
    <property type="entry name" value="Type_II_DNA_Topoisomerases"/>
</dbReference>
<dbReference type="NCBIfam" id="TIGR01063">
    <property type="entry name" value="gyrA"/>
    <property type="match status" value="1"/>
</dbReference>
<dbReference type="NCBIfam" id="NF004043">
    <property type="entry name" value="PRK05560.1"/>
    <property type="match status" value="1"/>
</dbReference>
<dbReference type="NCBIfam" id="NF004044">
    <property type="entry name" value="PRK05561.1"/>
    <property type="match status" value="1"/>
</dbReference>
<dbReference type="PANTHER" id="PTHR43493:SF5">
    <property type="entry name" value="DNA GYRASE SUBUNIT A, CHLOROPLASTIC_MITOCHONDRIAL"/>
    <property type="match status" value="1"/>
</dbReference>
<dbReference type="PANTHER" id="PTHR43493">
    <property type="entry name" value="DNA GYRASE/TOPOISOMERASE SUBUNIT A"/>
    <property type="match status" value="1"/>
</dbReference>
<dbReference type="Pfam" id="PF03989">
    <property type="entry name" value="DNA_gyraseA_C"/>
    <property type="match status" value="6"/>
</dbReference>
<dbReference type="Pfam" id="PF00521">
    <property type="entry name" value="DNA_topoisoIV"/>
    <property type="match status" value="1"/>
</dbReference>
<dbReference type="SMART" id="SM00434">
    <property type="entry name" value="TOP4c"/>
    <property type="match status" value="1"/>
</dbReference>
<dbReference type="SUPFAM" id="SSF101904">
    <property type="entry name" value="GyrA/ParC C-terminal domain-like"/>
    <property type="match status" value="1"/>
</dbReference>
<dbReference type="SUPFAM" id="SSF56719">
    <property type="entry name" value="Type II DNA topoisomerase"/>
    <property type="match status" value="1"/>
</dbReference>
<dbReference type="PROSITE" id="PS52040">
    <property type="entry name" value="TOPO_IIA"/>
    <property type="match status" value="1"/>
</dbReference>
<evidence type="ECO:0000255" key="1">
    <source>
        <dbReference type="HAMAP-Rule" id="MF_01897"/>
    </source>
</evidence>
<evidence type="ECO:0000255" key="2">
    <source>
        <dbReference type="PROSITE-ProRule" id="PRU01384"/>
    </source>
</evidence>
<evidence type="ECO:0000256" key="3">
    <source>
        <dbReference type="SAM" id="MobiDB-lite"/>
    </source>
</evidence>
<comment type="function">
    <text evidence="1">A type II topoisomerase that negatively supercoils closed circular double-stranded (ds) DNA in an ATP-dependent manner to modulate DNA topology and maintain chromosomes in an underwound state. Negative supercoiling favors strand separation, and DNA replication, transcription, recombination and repair, all of which involve strand separation. Also able to catalyze the interconversion of other topological isomers of dsDNA rings, including catenanes and knotted rings. Type II topoisomerases break and join 2 DNA strands simultaneously in an ATP-dependent manner.</text>
</comment>
<comment type="catalytic activity">
    <reaction evidence="1">
        <text>ATP-dependent breakage, passage and rejoining of double-stranded DNA.</text>
        <dbReference type="EC" id="5.6.2.2"/>
    </reaction>
</comment>
<comment type="subunit">
    <text evidence="1">Heterotetramer, composed of two GyrA and two GyrB chains. In the heterotetramer, GyrA contains the active site tyrosine that forms a transient covalent intermediate with DNA, while GyrB binds cofactors and catalyzes ATP hydrolysis.</text>
</comment>
<comment type="subcellular location">
    <subcellularLocation>
        <location evidence="1">Cytoplasm</location>
    </subcellularLocation>
</comment>
<comment type="miscellaneous">
    <text evidence="1">Few gyrases are as efficient as E.coli at forming negative supercoils. Not all organisms have 2 type II topoisomerases; in organisms with a single type II topoisomerase this enzyme also has to decatenate newly replicated chromosomes.</text>
</comment>
<comment type="similarity">
    <text evidence="1">Belongs to the type II topoisomerase GyrA/ParC subunit family.</text>
</comment>
<gene>
    <name evidence="1" type="primary">gyrA</name>
    <name type="ordered locus">SAV0006</name>
</gene>
<proteinExistence type="inferred from homology"/>
<keyword id="KW-0046">Antibiotic resistance</keyword>
<keyword id="KW-0067">ATP-binding</keyword>
<keyword id="KW-0963">Cytoplasm</keyword>
<keyword id="KW-0238">DNA-binding</keyword>
<keyword id="KW-0413">Isomerase</keyword>
<keyword id="KW-0547">Nucleotide-binding</keyword>
<keyword id="KW-0799">Topoisomerase</keyword>
<reference key="1">
    <citation type="journal article" date="2001" name="Lancet">
        <title>Whole genome sequencing of meticillin-resistant Staphylococcus aureus.</title>
        <authorList>
            <person name="Kuroda M."/>
            <person name="Ohta T."/>
            <person name="Uchiyama I."/>
            <person name="Baba T."/>
            <person name="Yuzawa H."/>
            <person name="Kobayashi I."/>
            <person name="Cui L."/>
            <person name="Oguchi A."/>
            <person name="Aoki K."/>
            <person name="Nagai Y."/>
            <person name="Lian J.-Q."/>
            <person name="Ito T."/>
            <person name="Kanamori M."/>
            <person name="Matsumaru H."/>
            <person name="Maruyama A."/>
            <person name="Murakami H."/>
            <person name="Hosoyama A."/>
            <person name="Mizutani-Ui Y."/>
            <person name="Takahashi N.K."/>
            <person name="Sawano T."/>
            <person name="Inoue R."/>
            <person name="Kaito C."/>
            <person name="Sekimizu K."/>
            <person name="Hirakawa H."/>
            <person name="Kuhara S."/>
            <person name="Goto S."/>
            <person name="Yabuzaki J."/>
            <person name="Kanehisa M."/>
            <person name="Yamashita A."/>
            <person name="Oshima K."/>
            <person name="Furuya K."/>
            <person name="Yoshino C."/>
            <person name="Shiba T."/>
            <person name="Hattori M."/>
            <person name="Ogasawara N."/>
            <person name="Hayashi H."/>
            <person name="Hiramatsu K."/>
        </authorList>
    </citation>
    <scope>NUCLEOTIDE SEQUENCE [LARGE SCALE GENOMIC DNA]</scope>
    <source>
        <strain>Mu50 / ATCC 700699</strain>
    </source>
</reference>